<name>PSBJ_WHEAT</name>
<gene>
    <name evidence="1" type="primary">psbJ</name>
</gene>
<organism>
    <name type="scientific">Triticum aestivum</name>
    <name type="common">Wheat</name>
    <dbReference type="NCBI Taxonomy" id="4565"/>
    <lineage>
        <taxon>Eukaryota</taxon>
        <taxon>Viridiplantae</taxon>
        <taxon>Streptophyta</taxon>
        <taxon>Embryophyta</taxon>
        <taxon>Tracheophyta</taxon>
        <taxon>Spermatophyta</taxon>
        <taxon>Magnoliopsida</taxon>
        <taxon>Liliopsida</taxon>
        <taxon>Poales</taxon>
        <taxon>Poaceae</taxon>
        <taxon>BOP clade</taxon>
        <taxon>Pooideae</taxon>
        <taxon>Triticodae</taxon>
        <taxon>Triticeae</taxon>
        <taxon>Triticinae</taxon>
        <taxon>Triticum</taxon>
    </lineage>
</organism>
<comment type="function">
    <text evidence="1">One of the components of the core complex of photosystem II (PSII). PSII is a light-driven water:plastoquinone oxidoreductase that uses light energy to abstract electrons from H(2)O, generating O(2) and a proton gradient subsequently used for ATP formation. It consists of a core antenna complex that captures photons, and an electron transfer chain that converts photonic excitation into a charge separation.</text>
</comment>
<comment type="subunit">
    <text evidence="1">PSII is composed of 1 copy each of membrane proteins PsbA, PsbB, PsbC, PsbD, PsbE, PsbF, PsbH, PsbI, PsbJ, PsbK, PsbL, PsbM, PsbT, PsbX, PsbY, PsbZ, Psb30/Ycf12, at least 3 peripheral proteins of the oxygen-evolving complex and a large number of cofactors. It forms dimeric complexes.</text>
</comment>
<comment type="subcellular location">
    <subcellularLocation>
        <location evidence="1">Plastid</location>
        <location evidence="1">Chloroplast thylakoid membrane</location>
        <topology evidence="1">Single-pass membrane protein</topology>
    </subcellularLocation>
</comment>
<comment type="similarity">
    <text evidence="1">Belongs to the PsbJ family.</text>
</comment>
<dbReference type="EMBL" id="X15225">
    <property type="protein sequence ID" value="CAA33297.1"/>
    <property type="molecule type" value="Genomic_DNA"/>
</dbReference>
<dbReference type="EMBL" id="AB042240">
    <property type="protein sequence ID" value="BAB47047.1"/>
    <property type="molecule type" value="Genomic_DNA"/>
</dbReference>
<dbReference type="RefSeq" id="NP_114272.1">
    <property type="nucleotide sequence ID" value="NC_002762.1"/>
</dbReference>
<dbReference type="SMR" id="Q95H59"/>
<dbReference type="STRING" id="4565.Q95H59"/>
<dbReference type="PaxDb" id="4565-EPlTAEP00000010005"/>
<dbReference type="GeneID" id="803152"/>
<dbReference type="KEGG" id="taes:803152"/>
<dbReference type="eggNOG" id="ENOG502SBI8">
    <property type="taxonomic scope" value="Eukaryota"/>
</dbReference>
<dbReference type="Proteomes" id="UP000019116">
    <property type="component" value="Chloroplast"/>
</dbReference>
<dbReference type="GO" id="GO:0009535">
    <property type="term" value="C:chloroplast thylakoid membrane"/>
    <property type="evidence" value="ECO:0007669"/>
    <property type="project" value="UniProtKB-SubCell"/>
</dbReference>
<dbReference type="GO" id="GO:0009523">
    <property type="term" value="C:photosystem II"/>
    <property type="evidence" value="ECO:0000318"/>
    <property type="project" value="GO_Central"/>
</dbReference>
<dbReference type="GO" id="GO:0009539">
    <property type="term" value="C:photosystem II reaction center"/>
    <property type="evidence" value="ECO:0007669"/>
    <property type="project" value="InterPro"/>
</dbReference>
<dbReference type="GO" id="GO:0015979">
    <property type="term" value="P:photosynthesis"/>
    <property type="evidence" value="ECO:0007669"/>
    <property type="project" value="UniProtKB-UniRule"/>
</dbReference>
<dbReference type="Gene3D" id="6.10.250.2070">
    <property type="match status" value="1"/>
</dbReference>
<dbReference type="HAMAP" id="MF_01305">
    <property type="entry name" value="PSII_PsbJ"/>
    <property type="match status" value="1"/>
</dbReference>
<dbReference type="InterPro" id="IPR002682">
    <property type="entry name" value="PSII_PsbJ"/>
</dbReference>
<dbReference type="InterPro" id="IPR037267">
    <property type="entry name" value="PSII_PsbJ_sf"/>
</dbReference>
<dbReference type="NCBIfam" id="NF002722">
    <property type="entry name" value="PRK02565.1"/>
    <property type="match status" value="1"/>
</dbReference>
<dbReference type="PANTHER" id="PTHR34812">
    <property type="entry name" value="PHOTOSYSTEM II REACTION CENTER PROTEIN J"/>
    <property type="match status" value="1"/>
</dbReference>
<dbReference type="PANTHER" id="PTHR34812:SF3">
    <property type="entry name" value="PHOTOSYSTEM II REACTION CENTER PROTEIN J"/>
    <property type="match status" value="1"/>
</dbReference>
<dbReference type="Pfam" id="PF01788">
    <property type="entry name" value="PsbJ"/>
    <property type="match status" value="1"/>
</dbReference>
<dbReference type="SUPFAM" id="SSF161021">
    <property type="entry name" value="Photosystem II reaction center protein J, PsbJ"/>
    <property type="match status" value="1"/>
</dbReference>
<keyword id="KW-0150">Chloroplast</keyword>
<keyword id="KW-0472">Membrane</keyword>
<keyword id="KW-0602">Photosynthesis</keyword>
<keyword id="KW-0604">Photosystem II</keyword>
<keyword id="KW-0934">Plastid</keyword>
<keyword id="KW-0674">Reaction center</keyword>
<keyword id="KW-1185">Reference proteome</keyword>
<keyword id="KW-0793">Thylakoid</keyword>
<keyword id="KW-0812">Transmembrane</keyword>
<keyword id="KW-1133">Transmembrane helix</keyword>
<geneLocation type="chloroplast"/>
<proteinExistence type="inferred from homology"/>
<protein>
    <recommendedName>
        <fullName evidence="1">Photosystem II reaction center protein J</fullName>
        <shortName evidence="1">PSII-J</shortName>
    </recommendedName>
</protein>
<sequence length="40" mass="3994">MSDTTGRIPLCLIGTVAGIAVIGLVGVFFYGSYSGLGSSL</sequence>
<evidence type="ECO:0000255" key="1">
    <source>
        <dbReference type="HAMAP-Rule" id="MF_01305"/>
    </source>
</evidence>
<evidence type="ECO:0000305" key="2"/>
<feature type="chain" id="PRO_0000216621" description="Photosystem II reaction center protein J">
    <location>
        <begin position="1"/>
        <end position="40"/>
    </location>
</feature>
<feature type="transmembrane region" description="Helical" evidence="1">
    <location>
        <begin position="8"/>
        <end position="28"/>
    </location>
</feature>
<feature type="sequence conflict" description="In Ref. 1; CAA33297." evidence="2" ref="1">
    <original>S</original>
    <variation>A</variation>
    <location>
        <position position="2"/>
    </location>
</feature>
<feature type="sequence conflict" description="In Ref. 1; CAA33297." evidence="2" ref="1">
    <original>C</original>
    <variation>W</variation>
    <location>
        <position position="11"/>
    </location>
</feature>
<reference key="1">
    <citation type="journal article" date="1989" name="Plant Mol. Biol.">
        <title>A photosystem II polypeptide is encoded by an open reading frame co-transcribed with genes for cytochrome b-559 in wheat chloroplast DNA.</title>
        <authorList>
            <person name="Webber A.N."/>
            <person name="Hird S.M."/>
            <person name="Packman L.C."/>
            <person name="Dyer T.A."/>
            <person name="Gray J.C."/>
        </authorList>
    </citation>
    <scope>NUCLEOTIDE SEQUENCE [GENOMIC DNA]</scope>
    <source>
        <strain>cv. Sentry</strain>
        <tissue>Leaf</tissue>
    </source>
</reference>
<reference key="2">
    <citation type="journal article" date="2000" name="Plant Mol. Biol. Rep.">
        <title>Chinese spring wheat (Triticum aestivum L.) chloroplast genome: complete sequence and contig clones.</title>
        <authorList>
            <person name="Ogihara Y."/>
            <person name="Isono K."/>
            <person name="Kojima T."/>
            <person name="Endo A."/>
            <person name="Hanaoka M."/>
            <person name="Shiina T."/>
            <person name="Terachi T."/>
            <person name="Utsugi S."/>
            <person name="Murata M."/>
            <person name="Mori N."/>
            <person name="Takumi S."/>
            <person name="Ikeo K."/>
            <person name="Gojobori T."/>
            <person name="Murai R."/>
            <person name="Murai K."/>
            <person name="Matsuoka Y."/>
            <person name="Ohnishi Y."/>
            <person name="Tajiri H."/>
            <person name="Tsunewaki K."/>
        </authorList>
    </citation>
    <scope>NUCLEOTIDE SEQUENCE [LARGE SCALE GENOMIC DNA]</scope>
    <source>
        <strain>cv. Chinese Spring</strain>
    </source>
</reference>
<accession>Q95H59</accession>